<evidence type="ECO:0000250" key="1"/>
<evidence type="ECO:0000255" key="2">
    <source>
        <dbReference type="PROSITE-ProRule" id="PRU00434"/>
    </source>
</evidence>
<evidence type="ECO:0000269" key="3">
    <source ref="2"/>
</evidence>
<evidence type="ECO:0000305" key="4"/>
<name>Y273_STRP6</name>
<proteinExistence type="evidence at protein level"/>
<dbReference type="EMBL" id="CP000003">
    <property type="protein sequence ID" value="AAT86408.1"/>
    <property type="molecule type" value="Genomic_DNA"/>
</dbReference>
<dbReference type="SMR" id="Q5XDV5"/>
<dbReference type="KEGG" id="spa:M6_Spy0273"/>
<dbReference type="HOGENOM" id="CLU_000604_48_1_9"/>
<dbReference type="Proteomes" id="UP000001167">
    <property type="component" value="Chromosome"/>
</dbReference>
<dbReference type="GO" id="GO:0005886">
    <property type="term" value="C:plasma membrane"/>
    <property type="evidence" value="ECO:0007669"/>
    <property type="project" value="UniProtKB-SubCell"/>
</dbReference>
<dbReference type="GO" id="GO:0005524">
    <property type="term" value="F:ATP binding"/>
    <property type="evidence" value="ECO:0007669"/>
    <property type="project" value="UniProtKB-KW"/>
</dbReference>
<dbReference type="GO" id="GO:0016887">
    <property type="term" value="F:ATP hydrolysis activity"/>
    <property type="evidence" value="ECO:0007669"/>
    <property type="project" value="InterPro"/>
</dbReference>
<dbReference type="CDD" id="cd03217">
    <property type="entry name" value="ABC_FeS_Assembly"/>
    <property type="match status" value="1"/>
</dbReference>
<dbReference type="Gene3D" id="3.40.50.300">
    <property type="entry name" value="P-loop containing nucleotide triphosphate hydrolases"/>
    <property type="match status" value="1"/>
</dbReference>
<dbReference type="InterPro" id="IPR003593">
    <property type="entry name" value="AAA+_ATPase"/>
</dbReference>
<dbReference type="InterPro" id="IPR003439">
    <property type="entry name" value="ABC_transporter-like_ATP-bd"/>
</dbReference>
<dbReference type="InterPro" id="IPR017871">
    <property type="entry name" value="ABC_transporter-like_CS"/>
</dbReference>
<dbReference type="InterPro" id="IPR010230">
    <property type="entry name" value="FeS-cluster_ATPase_SufC"/>
</dbReference>
<dbReference type="InterPro" id="IPR027417">
    <property type="entry name" value="P-loop_NTPase"/>
</dbReference>
<dbReference type="NCBIfam" id="TIGR01978">
    <property type="entry name" value="sufC"/>
    <property type="match status" value="1"/>
</dbReference>
<dbReference type="PANTHER" id="PTHR43204">
    <property type="entry name" value="ABC TRANSPORTER I FAMILY MEMBER 6, CHLOROPLASTIC"/>
    <property type="match status" value="1"/>
</dbReference>
<dbReference type="PANTHER" id="PTHR43204:SF1">
    <property type="entry name" value="ABC TRANSPORTER I FAMILY MEMBER 6, CHLOROPLASTIC"/>
    <property type="match status" value="1"/>
</dbReference>
<dbReference type="Pfam" id="PF00005">
    <property type="entry name" value="ABC_tran"/>
    <property type="match status" value="1"/>
</dbReference>
<dbReference type="SMART" id="SM00382">
    <property type="entry name" value="AAA"/>
    <property type="match status" value="1"/>
</dbReference>
<dbReference type="SUPFAM" id="SSF52540">
    <property type="entry name" value="P-loop containing nucleoside triphosphate hydrolases"/>
    <property type="match status" value="1"/>
</dbReference>
<dbReference type="PROSITE" id="PS00211">
    <property type="entry name" value="ABC_TRANSPORTER_1"/>
    <property type="match status" value="1"/>
</dbReference>
<dbReference type="PROSITE" id="PS50893">
    <property type="entry name" value="ABC_TRANSPORTER_2"/>
    <property type="match status" value="1"/>
</dbReference>
<comment type="subcellular location">
    <subcellularLocation>
        <location evidence="1">Cell membrane</location>
        <topology evidence="1">Peripheral membrane protein</topology>
    </subcellularLocation>
</comment>
<comment type="mass spectrometry" mass="28110.44" method="Electrospray" evidence="3"/>
<comment type="similarity">
    <text evidence="4">Belongs to the ABC transporter superfamily. Ycf16 family.</text>
</comment>
<protein>
    <recommendedName>
        <fullName>Probable ABC transporter ATP-binding protein M6_Spy0273</fullName>
    </recommendedName>
</protein>
<reference key="1">
    <citation type="journal article" date="2004" name="J. Infect. Dis.">
        <title>Progress toward characterization of the group A Streptococcus metagenome: complete genome sequence of a macrolide-resistant serotype M6 strain.</title>
        <authorList>
            <person name="Banks D.J."/>
            <person name="Porcella S.F."/>
            <person name="Barbian K.D."/>
            <person name="Beres S.B."/>
            <person name="Philips L.E."/>
            <person name="Voyich J.M."/>
            <person name="DeLeo F.R."/>
            <person name="Martin J.M."/>
            <person name="Somerville G.A."/>
            <person name="Musser J.M."/>
        </authorList>
    </citation>
    <scope>NUCLEOTIDE SEQUENCE [LARGE SCALE GENOMIC DNA]</scope>
    <source>
        <strain>ATCC BAA-946 / MGAS10394</strain>
    </source>
</reference>
<reference key="2">
    <citation type="submission" date="2000-05" db="UniProtKB">
        <title>Two-dimensional gel electrophoresis map of Streptococcus pyogenes proteins.</title>
        <authorList>
            <person name="Hogan D.A."/>
            <person name="Du P."/>
            <person name="Stevenson T.I."/>
            <person name="Whitton M."/>
            <person name="Kilby G.W."/>
            <person name="Rogers J."/>
            <person name="VanBogelen R.A."/>
        </authorList>
    </citation>
    <scope>PROTEIN SEQUENCE OF 17-42; 80-102; 110-118; 128-182 AND 207-235</scope>
    <scope>MASS SPECTROMETRY</scope>
    <source>
        <strain>JRS4 / Serotype M6</strain>
    </source>
</reference>
<feature type="chain" id="PRO_0000093214" description="Probable ABC transporter ATP-binding protein M6_Spy0273">
    <location>
        <begin position="1"/>
        <end position="256"/>
    </location>
</feature>
<feature type="domain" description="ABC transporter" evidence="2">
    <location>
        <begin position="4"/>
        <end position="246"/>
    </location>
</feature>
<feature type="binding site" evidence="2">
    <location>
        <begin position="36"/>
        <end position="43"/>
    </location>
    <ligand>
        <name>ATP</name>
        <dbReference type="ChEBI" id="CHEBI:30616"/>
    </ligand>
</feature>
<accession>Q5XDV5</accession>
<accession>P82552</accession>
<keyword id="KW-0067">ATP-binding</keyword>
<keyword id="KW-1003">Cell membrane</keyword>
<keyword id="KW-0903">Direct protein sequencing</keyword>
<keyword id="KW-0472">Membrane</keyword>
<keyword id="KW-0547">Nucleotide-binding</keyword>
<keyword id="KW-0813">Transport</keyword>
<sequence length="256" mass="28110">MSILEINNLHVSIEGKEILKGVNLTLKTGEVAAIMGPNGTGKSTLSAAIMGNPNYEVTQGQILLDGVNILDLEVDERARLGLFLAMQYPSEIPGITNAEFMRAAMNAGKADEDKISVRDFITKLDEKMALLGMKEEMAERYLNEGFSGGEKKRNEILQLLMLEPKFALLDEIDSGLDIDALKVVSKGVNEMRGKDFGAMIITHYQRLLNYITPDLVHVMMDGRIVLSGDAALATRLEKEGYAGIAQDLGIEYKEES</sequence>
<organism>
    <name type="scientific">Streptococcus pyogenes serotype M6 (strain ATCC BAA-946 / MGAS10394)</name>
    <dbReference type="NCBI Taxonomy" id="286636"/>
    <lineage>
        <taxon>Bacteria</taxon>
        <taxon>Bacillati</taxon>
        <taxon>Bacillota</taxon>
        <taxon>Bacilli</taxon>
        <taxon>Lactobacillales</taxon>
        <taxon>Streptococcaceae</taxon>
        <taxon>Streptococcus</taxon>
    </lineage>
</organism>
<gene>
    <name type="ordered locus">M6_Spy0273</name>
</gene>